<gene>
    <name evidence="1" type="primary">cmk</name>
    <name type="ordered locus">RC0748</name>
</gene>
<organism>
    <name type="scientific">Rickettsia conorii (strain ATCC VR-613 / Malish 7)</name>
    <dbReference type="NCBI Taxonomy" id="272944"/>
    <lineage>
        <taxon>Bacteria</taxon>
        <taxon>Pseudomonadati</taxon>
        <taxon>Pseudomonadota</taxon>
        <taxon>Alphaproteobacteria</taxon>
        <taxon>Rickettsiales</taxon>
        <taxon>Rickettsiaceae</taxon>
        <taxon>Rickettsieae</taxon>
        <taxon>Rickettsia</taxon>
        <taxon>spotted fever group</taxon>
    </lineage>
</organism>
<sequence length="219" mass="24474">MVDLKTKAFDISQNFTISLDGPAASGKGTIGLILAKKFSLKYFQSSIVYRQLAFDCISQKIDVTDIDAVIALSKELKLDNNFDLENENIGNIASQIAVISEIRNNLNKYLISLVKTTPRMIMEGRDIGTVVAPDADLKIFITANPQIRAERRYKQLQAKGKTCILDEILRQIILRDKRDKERKAAPLLPASDALIIDTSKLSAMEVVEEVTNYIKNKIT</sequence>
<dbReference type="EC" id="2.7.4.25" evidence="1"/>
<dbReference type="EMBL" id="AE006914">
    <property type="protein sequence ID" value="AAL03286.1"/>
    <property type="molecule type" value="Genomic_DNA"/>
</dbReference>
<dbReference type="PIR" id="D97793">
    <property type="entry name" value="D97793"/>
</dbReference>
<dbReference type="RefSeq" id="WP_010977366.1">
    <property type="nucleotide sequence ID" value="NC_003103.1"/>
</dbReference>
<dbReference type="SMR" id="Q92HM3"/>
<dbReference type="GeneID" id="928537"/>
<dbReference type="KEGG" id="rco:RC0748"/>
<dbReference type="PATRIC" id="fig|272944.4.peg.850"/>
<dbReference type="HOGENOM" id="CLU_079959_0_2_5"/>
<dbReference type="Proteomes" id="UP000000816">
    <property type="component" value="Chromosome"/>
</dbReference>
<dbReference type="GO" id="GO:0005737">
    <property type="term" value="C:cytoplasm"/>
    <property type="evidence" value="ECO:0007669"/>
    <property type="project" value="UniProtKB-SubCell"/>
</dbReference>
<dbReference type="GO" id="GO:0005524">
    <property type="term" value="F:ATP binding"/>
    <property type="evidence" value="ECO:0007669"/>
    <property type="project" value="UniProtKB-UniRule"/>
</dbReference>
<dbReference type="GO" id="GO:0036430">
    <property type="term" value="F:CMP kinase activity"/>
    <property type="evidence" value="ECO:0007669"/>
    <property type="project" value="RHEA"/>
</dbReference>
<dbReference type="GO" id="GO:0036431">
    <property type="term" value="F:dCMP kinase activity"/>
    <property type="evidence" value="ECO:0007669"/>
    <property type="project" value="RHEA"/>
</dbReference>
<dbReference type="GO" id="GO:0006220">
    <property type="term" value="P:pyrimidine nucleotide metabolic process"/>
    <property type="evidence" value="ECO:0007669"/>
    <property type="project" value="UniProtKB-UniRule"/>
</dbReference>
<dbReference type="CDD" id="cd02020">
    <property type="entry name" value="CMPK"/>
    <property type="match status" value="1"/>
</dbReference>
<dbReference type="Gene3D" id="3.40.50.300">
    <property type="entry name" value="P-loop containing nucleotide triphosphate hydrolases"/>
    <property type="match status" value="1"/>
</dbReference>
<dbReference type="HAMAP" id="MF_00238">
    <property type="entry name" value="Cytidyl_kinase_type1"/>
    <property type="match status" value="1"/>
</dbReference>
<dbReference type="InterPro" id="IPR003136">
    <property type="entry name" value="Cytidylate_kin"/>
</dbReference>
<dbReference type="InterPro" id="IPR011994">
    <property type="entry name" value="Cytidylate_kinase_dom"/>
</dbReference>
<dbReference type="InterPro" id="IPR027417">
    <property type="entry name" value="P-loop_NTPase"/>
</dbReference>
<dbReference type="NCBIfam" id="TIGR00017">
    <property type="entry name" value="cmk"/>
    <property type="match status" value="1"/>
</dbReference>
<dbReference type="Pfam" id="PF02224">
    <property type="entry name" value="Cytidylate_kin"/>
    <property type="match status" value="1"/>
</dbReference>
<dbReference type="SUPFAM" id="SSF52540">
    <property type="entry name" value="P-loop containing nucleoside triphosphate hydrolases"/>
    <property type="match status" value="1"/>
</dbReference>
<name>KCY_RICCN</name>
<feature type="chain" id="PRO_0000131965" description="Cytidylate kinase">
    <location>
        <begin position="1"/>
        <end position="219"/>
    </location>
</feature>
<feature type="binding site" evidence="1">
    <location>
        <begin position="21"/>
        <end position="29"/>
    </location>
    <ligand>
        <name>ATP</name>
        <dbReference type="ChEBI" id="CHEBI:30616"/>
    </ligand>
</feature>
<keyword id="KW-0067">ATP-binding</keyword>
<keyword id="KW-0963">Cytoplasm</keyword>
<keyword id="KW-0418">Kinase</keyword>
<keyword id="KW-0547">Nucleotide-binding</keyword>
<keyword id="KW-0808">Transferase</keyword>
<comment type="catalytic activity">
    <reaction evidence="1">
        <text>CMP + ATP = CDP + ADP</text>
        <dbReference type="Rhea" id="RHEA:11600"/>
        <dbReference type="ChEBI" id="CHEBI:30616"/>
        <dbReference type="ChEBI" id="CHEBI:58069"/>
        <dbReference type="ChEBI" id="CHEBI:60377"/>
        <dbReference type="ChEBI" id="CHEBI:456216"/>
        <dbReference type="EC" id="2.7.4.25"/>
    </reaction>
</comment>
<comment type="catalytic activity">
    <reaction evidence="1">
        <text>dCMP + ATP = dCDP + ADP</text>
        <dbReference type="Rhea" id="RHEA:25094"/>
        <dbReference type="ChEBI" id="CHEBI:30616"/>
        <dbReference type="ChEBI" id="CHEBI:57566"/>
        <dbReference type="ChEBI" id="CHEBI:58593"/>
        <dbReference type="ChEBI" id="CHEBI:456216"/>
        <dbReference type="EC" id="2.7.4.25"/>
    </reaction>
</comment>
<comment type="subcellular location">
    <subcellularLocation>
        <location evidence="1">Cytoplasm</location>
    </subcellularLocation>
</comment>
<comment type="similarity">
    <text evidence="1">Belongs to the cytidylate kinase family. Type 1 subfamily.</text>
</comment>
<accession>Q92HM3</accession>
<proteinExistence type="inferred from homology"/>
<protein>
    <recommendedName>
        <fullName evidence="1">Cytidylate kinase</fullName>
        <shortName evidence="1">CK</shortName>
        <ecNumber evidence="1">2.7.4.25</ecNumber>
    </recommendedName>
    <alternativeName>
        <fullName evidence="1">Cytidine monophosphate kinase</fullName>
        <shortName evidence="1">CMP kinase</shortName>
    </alternativeName>
</protein>
<reference key="1">
    <citation type="journal article" date="2001" name="Science">
        <title>Mechanisms of evolution in Rickettsia conorii and R. prowazekii.</title>
        <authorList>
            <person name="Ogata H."/>
            <person name="Audic S."/>
            <person name="Renesto-Audiffren P."/>
            <person name="Fournier P.-E."/>
            <person name="Barbe V."/>
            <person name="Samson D."/>
            <person name="Roux V."/>
            <person name="Cossart P."/>
            <person name="Weissenbach J."/>
            <person name="Claverie J.-M."/>
            <person name="Raoult D."/>
        </authorList>
    </citation>
    <scope>NUCLEOTIDE SEQUENCE [LARGE SCALE GENOMIC DNA]</scope>
    <source>
        <strain>ATCC VR-613 / Malish 7</strain>
    </source>
</reference>
<evidence type="ECO:0000255" key="1">
    <source>
        <dbReference type="HAMAP-Rule" id="MF_00238"/>
    </source>
</evidence>